<comment type="similarity">
    <text evidence="1">Belongs to the UPF0215 family.</text>
</comment>
<evidence type="ECO:0000255" key="1">
    <source>
        <dbReference type="HAMAP-Rule" id="MF_00582"/>
    </source>
</evidence>
<reference key="1">
    <citation type="journal article" date="2009" name="Proc. Natl. Acad. Sci. U.S.A.">
        <title>Biogeography of the Sulfolobus islandicus pan-genome.</title>
        <authorList>
            <person name="Reno M.L."/>
            <person name="Held N.L."/>
            <person name="Fields C.J."/>
            <person name="Burke P.V."/>
            <person name="Whitaker R.J."/>
        </authorList>
    </citation>
    <scope>NUCLEOTIDE SEQUENCE [LARGE SCALE GENOMIC DNA]</scope>
    <source>
        <strain>M.14.25 / Kamchatka #1</strain>
    </source>
</reference>
<organism>
    <name type="scientific">Saccharolobus islandicus (strain M.14.25 / Kamchatka #1)</name>
    <name type="common">Sulfolobus islandicus</name>
    <dbReference type="NCBI Taxonomy" id="427317"/>
    <lineage>
        <taxon>Archaea</taxon>
        <taxon>Thermoproteota</taxon>
        <taxon>Thermoprotei</taxon>
        <taxon>Sulfolobales</taxon>
        <taxon>Sulfolobaceae</taxon>
        <taxon>Saccharolobus</taxon>
    </lineage>
</organism>
<feature type="chain" id="PRO_1000212136" description="UPF0215 protein M1425_1884">
    <location>
        <begin position="1"/>
        <end position="179"/>
    </location>
</feature>
<proteinExistence type="inferred from homology"/>
<gene>
    <name type="ordered locus">M1425_1884</name>
</gene>
<sequence>MPISGVDDGYFPLSYKGGKGKTALVVVTFYDYEMIDLDWGLITVDGNDATDVLKQLRKGDIVILDGVIFAGFNYIVPYSDNMIFFYSKMPKVDLIKNALMKHFQADTERVREILYVLNNLKQIPTKRGNVFLYSTVELSLAKSIIEKYQIYSKIPEVLKSAHVIASSLGRFLARYKKTI</sequence>
<accession>C3MY71</accession>
<protein>
    <recommendedName>
        <fullName evidence="1">UPF0215 protein M1425_1884</fullName>
    </recommendedName>
</protein>
<name>Y1884_SACI4</name>
<dbReference type="EMBL" id="CP001400">
    <property type="protein sequence ID" value="ACP38628.1"/>
    <property type="molecule type" value="Genomic_DNA"/>
</dbReference>
<dbReference type="RefSeq" id="WP_012711857.1">
    <property type="nucleotide sequence ID" value="NC_012588.1"/>
</dbReference>
<dbReference type="SMR" id="C3MY71"/>
<dbReference type="KEGG" id="sia:M1425_1884"/>
<dbReference type="HOGENOM" id="CLU_095956_1_1_2"/>
<dbReference type="Proteomes" id="UP000001350">
    <property type="component" value="Chromosome"/>
</dbReference>
<dbReference type="Gene3D" id="3.30.2170.10">
    <property type="entry name" value="archaeoglobus fulgidus dsm 4304 superfamily"/>
    <property type="match status" value="1"/>
</dbReference>
<dbReference type="HAMAP" id="MF_00582">
    <property type="entry name" value="UPF0215"/>
    <property type="match status" value="1"/>
</dbReference>
<dbReference type="InterPro" id="IPR002802">
    <property type="entry name" value="Endo_dU"/>
</dbReference>
<dbReference type="PANTHER" id="PTHR39518">
    <property type="entry name" value="UPF0215 PROTEIN MJ1150"/>
    <property type="match status" value="1"/>
</dbReference>
<dbReference type="PANTHER" id="PTHR39518:SF2">
    <property type="entry name" value="UPF0215 PROTEIN MJ1150"/>
    <property type="match status" value="1"/>
</dbReference>
<dbReference type="Pfam" id="PF01949">
    <property type="entry name" value="DUF99"/>
    <property type="match status" value="1"/>
</dbReference>
<dbReference type="PIRSF" id="PIRSF006380">
    <property type="entry name" value="UCP006380"/>
    <property type="match status" value="1"/>
</dbReference>